<organism>
    <name type="scientific">Nematostella vectensis</name>
    <name type="common">Starlet sea anemone</name>
    <dbReference type="NCBI Taxonomy" id="45351"/>
    <lineage>
        <taxon>Eukaryota</taxon>
        <taxon>Metazoa</taxon>
        <taxon>Cnidaria</taxon>
        <taxon>Anthozoa</taxon>
        <taxon>Hexacorallia</taxon>
        <taxon>Actiniaria</taxon>
        <taxon>Edwardsiidae</taxon>
        <taxon>Nematostella</taxon>
    </lineage>
</organism>
<feature type="chain" id="PRO_0000388072" description="Ubiquinone biosynthesis protein COQ4 homolog, mitochondrial">
    <location>
        <begin position="1"/>
        <end position="208"/>
    </location>
</feature>
<feature type="binding site" evidence="1">
    <location>
        <position position="105"/>
    </location>
    <ligand>
        <name>Zn(2+)</name>
        <dbReference type="ChEBI" id="CHEBI:29105"/>
    </ligand>
</feature>
<feature type="binding site" evidence="1">
    <location>
        <position position="106"/>
    </location>
    <ligand>
        <name>Zn(2+)</name>
        <dbReference type="ChEBI" id="CHEBI:29105"/>
    </ligand>
</feature>
<feature type="binding site" evidence="1">
    <location>
        <position position="109"/>
    </location>
    <ligand>
        <name>Zn(2+)</name>
        <dbReference type="ChEBI" id="CHEBI:29105"/>
    </ligand>
</feature>
<feature type="binding site" evidence="1">
    <location>
        <position position="122"/>
    </location>
    <ligand>
        <name>Zn(2+)</name>
        <dbReference type="ChEBI" id="CHEBI:29105"/>
    </ligand>
</feature>
<comment type="function">
    <text evidence="1">Lyase that catalyzes the C1-decarboxylation of 4-hydroxy-3-methoxy-5-(all-trans-polyprenyl)benzoic acid into 2-methoxy-6-(all-trans-polyprenyl)phenol during ubiquinone biosynthesis.</text>
</comment>
<comment type="catalytic activity">
    <reaction evidence="1">
        <text>a 4-hydroxy-3-methoxy-5-(all-trans-polyprenyl)benzoate + H(+) = a 2-methoxy-6-(all-trans-polyprenyl)phenol + CO2</text>
        <dbReference type="Rhea" id="RHEA:81179"/>
        <dbReference type="Rhea" id="RHEA-COMP:9551"/>
        <dbReference type="Rhea" id="RHEA-COMP:10931"/>
        <dbReference type="ChEBI" id="CHEBI:15378"/>
        <dbReference type="ChEBI" id="CHEBI:16526"/>
        <dbReference type="ChEBI" id="CHEBI:62731"/>
        <dbReference type="ChEBI" id="CHEBI:84443"/>
        <dbReference type="EC" id="4.1.1.130"/>
    </reaction>
</comment>
<comment type="cofactor">
    <cofactor evidence="1">
        <name>Zn(2+)</name>
        <dbReference type="ChEBI" id="CHEBI:29105"/>
    </cofactor>
</comment>
<comment type="pathway">
    <text evidence="1">Cofactor biosynthesis; ubiquinone biosynthesis.</text>
</comment>
<comment type="subunit">
    <text evidence="1">Component of a multi-subunit COQ enzyme complex.</text>
</comment>
<comment type="subcellular location">
    <subcellularLocation>
        <location evidence="1">Mitochondrion inner membrane</location>
        <topology evidence="1">Peripheral membrane protein</topology>
        <orientation evidence="1">Matrix side</orientation>
    </subcellularLocation>
</comment>
<comment type="miscellaneous">
    <text evidence="1">This protein may be expected to contain an N-terminal transit peptide but none has been predicted.</text>
</comment>
<comment type="similarity">
    <text evidence="1">Belongs to the COQ4 family.</text>
</comment>
<gene>
    <name type="ORF">v1g191789</name>
</gene>
<keyword id="KW-0456">Lyase</keyword>
<keyword id="KW-0472">Membrane</keyword>
<keyword id="KW-0479">Metal-binding</keyword>
<keyword id="KW-0496">Mitochondrion</keyword>
<keyword id="KW-0999">Mitochondrion inner membrane</keyword>
<keyword id="KW-1185">Reference proteome</keyword>
<keyword id="KW-0831">Ubiquinone biosynthesis</keyword>
<keyword id="KW-0862">Zinc</keyword>
<protein>
    <recommendedName>
        <fullName evidence="1">Ubiquinone biosynthesis protein COQ4 homolog, mitochondrial</fullName>
    </recommendedName>
    <alternativeName>
        <fullName>4-hydroxy-3-methoxy-5-polyprenylbenzoate decarboxylase</fullName>
        <ecNumber evidence="1">4.1.1.130</ecNumber>
    </alternativeName>
    <alternativeName>
        <fullName evidence="1">Coenzyme Q biosynthesis protein 4 homolog</fullName>
    </alternativeName>
</protein>
<dbReference type="EC" id="4.1.1.130" evidence="1"/>
<dbReference type="EMBL" id="DS469723">
    <property type="protein sequence ID" value="EDO34664.1"/>
    <property type="molecule type" value="Genomic_DNA"/>
</dbReference>
<dbReference type="RefSeq" id="XP_001626764.1">
    <property type="nucleotide sequence ID" value="XM_001626714.1"/>
</dbReference>
<dbReference type="SMR" id="A7SNR3"/>
<dbReference type="STRING" id="45351.A7SNR3"/>
<dbReference type="EnsemblMetazoa" id="EDO34664">
    <property type="protein sequence ID" value="EDO34664"/>
    <property type="gene ID" value="NEMVEDRAFT_v1g191789"/>
</dbReference>
<dbReference type="KEGG" id="nve:5506011"/>
<dbReference type="eggNOG" id="KOG3244">
    <property type="taxonomic scope" value="Eukaryota"/>
</dbReference>
<dbReference type="HOGENOM" id="CLU_061241_1_1_1"/>
<dbReference type="InParanoid" id="A7SNR3"/>
<dbReference type="OMA" id="YYERHFH"/>
<dbReference type="OrthoDB" id="4249at2759"/>
<dbReference type="PhylomeDB" id="A7SNR3"/>
<dbReference type="UniPathway" id="UPA00232"/>
<dbReference type="Proteomes" id="UP000001593">
    <property type="component" value="Unassembled WGS sequence"/>
</dbReference>
<dbReference type="GO" id="GO:0031314">
    <property type="term" value="C:extrinsic component of mitochondrial inner membrane"/>
    <property type="evidence" value="ECO:0007669"/>
    <property type="project" value="UniProtKB-UniRule"/>
</dbReference>
<dbReference type="GO" id="GO:0005739">
    <property type="term" value="C:mitochondrion"/>
    <property type="evidence" value="ECO:0000318"/>
    <property type="project" value="GO_Central"/>
</dbReference>
<dbReference type="GO" id="GO:0006744">
    <property type="term" value="P:ubiquinone biosynthetic process"/>
    <property type="evidence" value="ECO:0007669"/>
    <property type="project" value="UniProtKB-UniRule"/>
</dbReference>
<dbReference type="HAMAP" id="MF_03111">
    <property type="entry name" value="Coq4"/>
    <property type="match status" value="1"/>
</dbReference>
<dbReference type="InterPro" id="IPR007715">
    <property type="entry name" value="Coq4"/>
</dbReference>
<dbReference type="InterPro" id="IPR027540">
    <property type="entry name" value="Coq4_euk"/>
</dbReference>
<dbReference type="PANTHER" id="PTHR12922">
    <property type="entry name" value="UBIQUINONE BIOSYNTHESIS PROTEIN"/>
    <property type="match status" value="1"/>
</dbReference>
<dbReference type="PANTHER" id="PTHR12922:SF7">
    <property type="entry name" value="UBIQUINONE BIOSYNTHESIS PROTEIN COQ4 HOMOLOG, MITOCHONDRIAL"/>
    <property type="match status" value="1"/>
</dbReference>
<dbReference type="Pfam" id="PF05019">
    <property type="entry name" value="Coq4"/>
    <property type="match status" value="1"/>
</dbReference>
<sequence length="208" mass="24298">MALYNPYRSDMVATLGETTGFVARQLMLYRMKQDPVGREILRLQPRVKSWTVDLNEMRSLQEGTFGREYARFMDDNGLDQDSRDDVKFVDDIELAYVMQRYRDIHDFTHTLTGLPTVSVAGEIAVKWFEMVQTGLPMCTLGSIFGPLNPEVTPKHREQLRSYYIPWALSNGMKAKFIMNVFYERHFEEPIDSLRKKMNLTPARRLDGW</sequence>
<proteinExistence type="inferred from homology"/>
<reference key="1">
    <citation type="journal article" date="2007" name="Science">
        <title>Sea anemone genome reveals ancestral eumetazoan gene repertoire and genomic organization.</title>
        <authorList>
            <person name="Putnam N.H."/>
            <person name="Srivastava M."/>
            <person name="Hellsten U."/>
            <person name="Dirks B."/>
            <person name="Chapman J."/>
            <person name="Salamov A."/>
            <person name="Terry A."/>
            <person name="Shapiro H."/>
            <person name="Lindquist E."/>
            <person name="Kapitonov V.V."/>
            <person name="Jurka J."/>
            <person name="Genikhovich G."/>
            <person name="Grigoriev I.V."/>
            <person name="Lucas S.M."/>
            <person name="Steele R.E."/>
            <person name="Finnerty J.R."/>
            <person name="Technau U."/>
            <person name="Martindale M.Q."/>
            <person name="Rokhsar D.S."/>
        </authorList>
    </citation>
    <scope>NUCLEOTIDE SEQUENCE [LARGE SCALE GENOMIC DNA]</scope>
    <source>
        <strain>CH2 X CH6</strain>
    </source>
</reference>
<accession>A7SNR3</accession>
<name>COQ4_NEMVE</name>
<evidence type="ECO:0000255" key="1">
    <source>
        <dbReference type="HAMAP-Rule" id="MF_03111"/>
    </source>
</evidence>